<keyword id="KW-0067">ATP-binding</keyword>
<keyword id="KW-0963">Cytoplasm</keyword>
<keyword id="KW-0237">DNA synthesis</keyword>
<keyword id="KW-0418">Kinase</keyword>
<keyword id="KW-0479">Metal-binding</keyword>
<keyword id="KW-0547">Nucleotide-binding</keyword>
<keyword id="KW-0808">Transferase</keyword>
<keyword id="KW-0862">Zinc</keyword>
<accession>Q57NR0</accession>
<sequence length="205" mass="23433">MAQLYFYYSAMNAGKSTALLQSSYNYQERGMRTVVYTAEIDDRFGAGKVSSRIGLSSPAKLFNQNTSLFEEIRAESVRQTIHCVLVDESQFLTRQQVYQLSEVVDKLDIPVLCYGLRTDFRGELFVGSQYLLAWSDKLVELKTICFCGRKASMVLRLDQDGRPYNEGEQVVIGGNERYVSVCRKHYKDALEEGSLTAIQERHRHI</sequence>
<evidence type="ECO:0000255" key="1">
    <source>
        <dbReference type="HAMAP-Rule" id="MF_00124"/>
    </source>
</evidence>
<organism>
    <name type="scientific">Salmonella choleraesuis (strain SC-B67)</name>
    <dbReference type="NCBI Taxonomy" id="321314"/>
    <lineage>
        <taxon>Bacteria</taxon>
        <taxon>Pseudomonadati</taxon>
        <taxon>Pseudomonadota</taxon>
        <taxon>Gammaproteobacteria</taxon>
        <taxon>Enterobacterales</taxon>
        <taxon>Enterobacteriaceae</taxon>
        <taxon>Salmonella</taxon>
    </lineage>
</organism>
<feature type="chain" id="PRO_0000175011" description="Thymidine kinase">
    <location>
        <begin position="1"/>
        <end position="205"/>
    </location>
</feature>
<feature type="active site" description="Proton acceptor" evidence="1">
    <location>
        <position position="88"/>
    </location>
</feature>
<feature type="binding site" evidence="1">
    <location>
        <begin position="9"/>
        <end position="16"/>
    </location>
    <ligand>
        <name>ATP</name>
        <dbReference type="ChEBI" id="CHEBI:30616"/>
    </ligand>
</feature>
<feature type="binding site" evidence="1">
    <location>
        <begin position="87"/>
        <end position="90"/>
    </location>
    <ligand>
        <name>ATP</name>
        <dbReference type="ChEBI" id="CHEBI:30616"/>
    </ligand>
</feature>
<feature type="binding site" evidence="1">
    <location>
        <position position="145"/>
    </location>
    <ligand>
        <name>Zn(2+)</name>
        <dbReference type="ChEBI" id="CHEBI:29105"/>
    </ligand>
</feature>
<feature type="binding site" evidence="1">
    <location>
        <position position="147"/>
    </location>
    <ligand>
        <name>Zn(2+)</name>
        <dbReference type="ChEBI" id="CHEBI:29105"/>
    </ligand>
</feature>
<feature type="binding site" evidence="1">
    <location>
        <position position="182"/>
    </location>
    <ligand>
        <name>Zn(2+)</name>
        <dbReference type="ChEBI" id="CHEBI:29105"/>
    </ligand>
</feature>
<feature type="binding site" evidence="1">
    <location>
        <position position="185"/>
    </location>
    <ligand>
        <name>Zn(2+)</name>
        <dbReference type="ChEBI" id="CHEBI:29105"/>
    </ligand>
</feature>
<name>KITH_SALCH</name>
<reference key="1">
    <citation type="journal article" date="2005" name="Nucleic Acids Res.">
        <title>The genome sequence of Salmonella enterica serovar Choleraesuis, a highly invasive and resistant zoonotic pathogen.</title>
        <authorList>
            <person name="Chiu C.-H."/>
            <person name="Tang P."/>
            <person name="Chu C."/>
            <person name="Hu S."/>
            <person name="Bao Q."/>
            <person name="Yu J."/>
            <person name="Chou Y.-Y."/>
            <person name="Wang H.-S."/>
            <person name="Lee Y.-S."/>
        </authorList>
    </citation>
    <scope>NUCLEOTIDE SEQUENCE [LARGE SCALE GENOMIC DNA]</scope>
    <source>
        <strain>SC-B67</strain>
    </source>
</reference>
<dbReference type="EC" id="2.7.1.21" evidence="1"/>
<dbReference type="EMBL" id="AE017220">
    <property type="protein sequence ID" value="AAX65651.1"/>
    <property type="molecule type" value="Genomic_DNA"/>
</dbReference>
<dbReference type="RefSeq" id="WP_000068101.1">
    <property type="nucleotide sequence ID" value="NC_006905.1"/>
</dbReference>
<dbReference type="SMR" id="Q57NR0"/>
<dbReference type="KEGG" id="sec:SCH_1745"/>
<dbReference type="HOGENOM" id="CLU_064400_2_1_6"/>
<dbReference type="Proteomes" id="UP000000538">
    <property type="component" value="Chromosome"/>
</dbReference>
<dbReference type="GO" id="GO:0005829">
    <property type="term" value="C:cytosol"/>
    <property type="evidence" value="ECO:0007669"/>
    <property type="project" value="TreeGrafter"/>
</dbReference>
<dbReference type="GO" id="GO:0005524">
    <property type="term" value="F:ATP binding"/>
    <property type="evidence" value="ECO:0007669"/>
    <property type="project" value="UniProtKB-UniRule"/>
</dbReference>
<dbReference type="GO" id="GO:0004797">
    <property type="term" value="F:thymidine kinase activity"/>
    <property type="evidence" value="ECO:0007669"/>
    <property type="project" value="UniProtKB-UniRule"/>
</dbReference>
<dbReference type="GO" id="GO:0008270">
    <property type="term" value="F:zinc ion binding"/>
    <property type="evidence" value="ECO:0007669"/>
    <property type="project" value="UniProtKB-UniRule"/>
</dbReference>
<dbReference type="GO" id="GO:0071897">
    <property type="term" value="P:DNA biosynthetic process"/>
    <property type="evidence" value="ECO:0007669"/>
    <property type="project" value="UniProtKB-KW"/>
</dbReference>
<dbReference type="GO" id="GO:0046104">
    <property type="term" value="P:thymidine metabolic process"/>
    <property type="evidence" value="ECO:0007669"/>
    <property type="project" value="TreeGrafter"/>
</dbReference>
<dbReference type="FunFam" id="3.30.60.20:FF:000017">
    <property type="entry name" value="Thymidine kinase"/>
    <property type="match status" value="1"/>
</dbReference>
<dbReference type="FunFam" id="3.40.50.300:FF:000323">
    <property type="entry name" value="Thymidine kinase"/>
    <property type="match status" value="1"/>
</dbReference>
<dbReference type="Gene3D" id="3.30.60.20">
    <property type="match status" value="1"/>
</dbReference>
<dbReference type="Gene3D" id="3.40.50.300">
    <property type="entry name" value="P-loop containing nucleotide triphosphate hydrolases"/>
    <property type="match status" value="1"/>
</dbReference>
<dbReference type="HAMAP" id="MF_00124">
    <property type="entry name" value="Thymidine_kinase"/>
    <property type="match status" value="1"/>
</dbReference>
<dbReference type="InterPro" id="IPR027417">
    <property type="entry name" value="P-loop_NTPase"/>
</dbReference>
<dbReference type="InterPro" id="IPR001267">
    <property type="entry name" value="Thymidine_kinase"/>
</dbReference>
<dbReference type="InterPro" id="IPR020633">
    <property type="entry name" value="Thymidine_kinase_CS"/>
</dbReference>
<dbReference type="NCBIfam" id="NF003298">
    <property type="entry name" value="PRK04296.1-3"/>
    <property type="match status" value="1"/>
</dbReference>
<dbReference type="NCBIfam" id="NF003300">
    <property type="entry name" value="PRK04296.1-5"/>
    <property type="match status" value="1"/>
</dbReference>
<dbReference type="PANTHER" id="PTHR11441">
    <property type="entry name" value="THYMIDINE KINASE"/>
    <property type="match status" value="1"/>
</dbReference>
<dbReference type="PANTHER" id="PTHR11441:SF0">
    <property type="entry name" value="THYMIDINE KINASE, CYTOSOLIC"/>
    <property type="match status" value="1"/>
</dbReference>
<dbReference type="Pfam" id="PF00265">
    <property type="entry name" value="TK"/>
    <property type="match status" value="1"/>
</dbReference>
<dbReference type="PIRSF" id="PIRSF035805">
    <property type="entry name" value="TK_cell"/>
    <property type="match status" value="1"/>
</dbReference>
<dbReference type="SUPFAM" id="SSF57716">
    <property type="entry name" value="Glucocorticoid receptor-like (DNA-binding domain)"/>
    <property type="match status" value="1"/>
</dbReference>
<dbReference type="SUPFAM" id="SSF52540">
    <property type="entry name" value="P-loop containing nucleoside triphosphate hydrolases"/>
    <property type="match status" value="1"/>
</dbReference>
<dbReference type="PROSITE" id="PS00603">
    <property type="entry name" value="TK_CELLULAR_TYPE"/>
    <property type="match status" value="1"/>
</dbReference>
<gene>
    <name evidence="1" type="primary">tdk</name>
    <name type="ordered locus">SCH_1745</name>
</gene>
<proteinExistence type="inferred from homology"/>
<comment type="catalytic activity">
    <reaction evidence="1">
        <text>thymidine + ATP = dTMP + ADP + H(+)</text>
        <dbReference type="Rhea" id="RHEA:19129"/>
        <dbReference type="ChEBI" id="CHEBI:15378"/>
        <dbReference type="ChEBI" id="CHEBI:17748"/>
        <dbReference type="ChEBI" id="CHEBI:30616"/>
        <dbReference type="ChEBI" id="CHEBI:63528"/>
        <dbReference type="ChEBI" id="CHEBI:456216"/>
        <dbReference type="EC" id="2.7.1.21"/>
    </reaction>
</comment>
<comment type="subunit">
    <text evidence="1">Homotetramer.</text>
</comment>
<comment type="subcellular location">
    <subcellularLocation>
        <location evidence="1">Cytoplasm</location>
    </subcellularLocation>
</comment>
<comment type="similarity">
    <text evidence="1">Belongs to the thymidine kinase family.</text>
</comment>
<protein>
    <recommendedName>
        <fullName evidence="1">Thymidine kinase</fullName>
        <ecNumber evidence="1">2.7.1.21</ecNumber>
    </recommendedName>
</protein>